<proteinExistence type="evidence at transcript level"/>
<sequence>MPQAHFFALLLAAVVPAVLADGPPESMGEKFSGLNVLDGNGGLQSLTPTPYTISQWPWGTVPKLCYDTSVNNKYCNPYDLEVYDVRYTDCPIPTTVCRCKNSPMAIDTIAQRVGQLPVKARQYNGYVSSFAGDMCSAYSDSFNNYFFGDCGNSESVFFHELSHNLDRHVAGASINDWYSLSQDWKDTVAKDTCVADHYSKASWLEAYAQVGVMAGYDATVQSIYTQNVGCMVNQVKKVVGQLNSVWRKQPGQMCDRYWIKDTTVCMGPDAEASGHCQASKADVAAESGGVNPVLPDGQQKKHDALVKELQRHAEAAAGISSGKPAADRKTKGKKGTKFRV</sequence>
<comment type="developmental stage">
    <text>Expressed early during conidial (dormant spores) differentiation.</text>
</comment>
<reference key="1">
    <citation type="journal article" date="1990" name="Gene">
        <title>Genes expressed during conidiation in Neurospora crassa: molecular characterization of con-13.</title>
        <authorList>
            <person name="Hager K.M."/>
            <person name="Yanofsky C."/>
        </authorList>
    </citation>
    <scope>NUCLEOTIDE SEQUENCE [GENOMIC DNA]</scope>
    <source>
        <tissue>Conidium</tissue>
    </source>
</reference>
<reference key="2">
    <citation type="journal article" date="2003" name="Nature">
        <title>The genome sequence of the filamentous fungus Neurospora crassa.</title>
        <authorList>
            <person name="Galagan J.E."/>
            <person name="Calvo S.E."/>
            <person name="Borkovich K.A."/>
            <person name="Selker E.U."/>
            <person name="Read N.D."/>
            <person name="Jaffe D.B."/>
            <person name="FitzHugh W."/>
            <person name="Ma L.-J."/>
            <person name="Smirnov S."/>
            <person name="Purcell S."/>
            <person name="Rehman B."/>
            <person name="Elkins T."/>
            <person name="Engels R."/>
            <person name="Wang S."/>
            <person name="Nielsen C.B."/>
            <person name="Butler J."/>
            <person name="Endrizzi M."/>
            <person name="Qui D."/>
            <person name="Ianakiev P."/>
            <person name="Bell-Pedersen D."/>
            <person name="Nelson M.A."/>
            <person name="Werner-Washburne M."/>
            <person name="Selitrennikoff C.P."/>
            <person name="Kinsey J.A."/>
            <person name="Braun E.L."/>
            <person name="Zelter A."/>
            <person name="Schulte U."/>
            <person name="Kothe G.O."/>
            <person name="Jedd G."/>
            <person name="Mewes H.-W."/>
            <person name="Staben C."/>
            <person name="Marcotte E."/>
            <person name="Greenberg D."/>
            <person name="Roy A."/>
            <person name="Foley K."/>
            <person name="Naylor J."/>
            <person name="Stange-Thomann N."/>
            <person name="Barrett R."/>
            <person name="Gnerre S."/>
            <person name="Kamal M."/>
            <person name="Kamvysselis M."/>
            <person name="Mauceli E.W."/>
            <person name="Bielke C."/>
            <person name="Rudd S."/>
            <person name="Frishman D."/>
            <person name="Krystofova S."/>
            <person name="Rasmussen C."/>
            <person name="Metzenberg R.L."/>
            <person name="Perkins D.D."/>
            <person name="Kroken S."/>
            <person name="Cogoni C."/>
            <person name="Macino G."/>
            <person name="Catcheside D.E.A."/>
            <person name="Li W."/>
            <person name="Pratt R.J."/>
            <person name="Osmani S.A."/>
            <person name="DeSouza C.P.C."/>
            <person name="Glass N.L."/>
            <person name="Orbach M.J."/>
            <person name="Berglund J.A."/>
            <person name="Voelker R."/>
            <person name="Yarden O."/>
            <person name="Plamann M."/>
            <person name="Seiler S."/>
            <person name="Dunlap J.C."/>
            <person name="Radford A."/>
            <person name="Aramayo R."/>
            <person name="Natvig D.O."/>
            <person name="Alex L.A."/>
            <person name="Mannhaupt G."/>
            <person name="Ebbole D.J."/>
            <person name="Freitag M."/>
            <person name="Paulsen I."/>
            <person name="Sachs M.S."/>
            <person name="Lander E.S."/>
            <person name="Nusbaum C."/>
            <person name="Birren B.W."/>
        </authorList>
    </citation>
    <scope>NUCLEOTIDE SEQUENCE [LARGE SCALE GENOMIC DNA]</scope>
    <source>
        <strain>ATCC 24698 / 74-OR23-1A / CBS 708.71 / DSM 1257 / FGSC 987</strain>
    </source>
</reference>
<feature type="chain" id="PRO_0000090019" description="Conidiation-specific protein 13">
    <location>
        <begin position="1"/>
        <end position="340"/>
    </location>
</feature>
<feature type="region of interest" description="Disordered" evidence="1">
    <location>
        <begin position="313"/>
        <end position="340"/>
    </location>
</feature>
<feature type="compositionally biased region" description="Basic residues" evidence="1">
    <location>
        <begin position="330"/>
        <end position="340"/>
    </location>
</feature>
<organism>
    <name type="scientific">Neurospora crassa (strain ATCC 24698 / 74-OR23-1A / CBS 708.71 / DSM 1257 / FGSC 987)</name>
    <dbReference type="NCBI Taxonomy" id="367110"/>
    <lineage>
        <taxon>Eukaryota</taxon>
        <taxon>Fungi</taxon>
        <taxon>Dikarya</taxon>
        <taxon>Ascomycota</taxon>
        <taxon>Pezizomycotina</taxon>
        <taxon>Sordariomycetes</taxon>
        <taxon>Sordariomycetidae</taxon>
        <taxon>Sordariales</taxon>
        <taxon>Sordariaceae</taxon>
        <taxon>Neurospora</taxon>
    </lineage>
</organism>
<protein>
    <recommendedName>
        <fullName>Conidiation-specific protein 13</fullName>
    </recommendedName>
</protein>
<evidence type="ECO:0000256" key="1">
    <source>
        <dbReference type="SAM" id="MobiDB-lite"/>
    </source>
</evidence>
<keyword id="KW-0183">Conidiation</keyword>
<keyword id="KW-0221">Differentiation</keyword>
<keyword id="KW-1185">Reference proteome</keyword>
<keyword id="KW-0749">Sporulation</keyword>
<gene>
    <name type="primary">con-13</name>
    <name type="ORF">NCU07324</name>
</gene>
<name>CON13_NEUCR</name>
<dbReference type="EMBL" id="M35120">
    <property type="protein sequence ID" value="AAA33566.1"/>
    <property type="molecule type" value="Genomic_DNA"/>
</dbReference>
<dbReference type="EMBL" id="CM002239">
    <property type="protein sequence ID" value="EAA33246.1"/>
    <property type="molecule type" value="Genomic_DNA"/>
</dbReference>
<dbReference type="PIR" id="JH0363">
    <property type="entry name" value="JH0363"/>
</dbReference>
<dbReference type="RefSeq" id="XP_962482.1">
    <property type="nucleotide sequence ID" value="XM_957389.1"/>
</dbReference>
<dbReference type="STRING" id="367110.P19463"/>
<dbReference type="PaxDb" id="5141-EFNCRP00000007109"/>
<dbReference type="EnsemblFungi" id="EAA33246">
    <property type="protein sequence ID" value="EAA33246"/>
    <property type="gene ID" value="NCU07324"/>
</dbReference>
<dbReference type="GeneID" id="3878630"/>
<dbReference type="KEGG" id="ncr:NCU07324"/>
<dbReference type="VEuPathDB" id="FungiDB:NCU07324"/>
<dbReference type="HOGENOM" id="CLU_837194_0_0_1"/>
<dbReference type="InParanoid" id="P19463"/>
<dbReference type="OMA" id="ESVFFHE"/>
<dbReference type="OrthoDB" id="2142213at2759"/>
<dbReference type="Proteomes" id="UP000001805">
    <property type="component" value="Chromosome 4, Linkage Group IV"/>
</dbReference>
<dbReference type="GO" id="GO:0048315">
    <property type="term" value="P:conidium formation"/>
    <property type="evidence" value="ECO:0007669"/>
    <property type="project" value="UniProtKB-KW"/>
</dbReference>
<dbReference type="GO" id="GO:0030435">
    <property type="term" value="P:sporulation resulting in formation of a cellular spore"/>
    <property type="evidence" value="ECO:0007669"/>
    <property type="project" value="UniProtKB-KW"/>
</dbReference>
<accession>P19463</accession>
<accession>Q7RVG8</accession>